<comment type="function">
    <text evidence="1 4 5">Plays a role in the regulation of the growth of actin filaments. Inhibits the activity of the F-actin-capping protein complex formed by the CAPZA1 and CAPZB heterodimer (By similarity). Promotes dimerization of NF-kappa-B subunits and regulates NF-kappa-B transcription factor activity. Promotes growth of cardiomyocytes, but not cardiomyocyte proliferation. Promotes cardiac muscle hypertrophy.</text>
</comment>
<comment type="subunit">
    <text evidence="1 5">Interacts with the heterodimer formed by CAPZA1 and CAPZB (By similarity). Interacts with RELA.</text>
</comment>
<comment type="interaction">
    <interactant intactId="EBI-2128047">
        <id>P62775</id>
    </interactant>
    <interactant intactId="EBI-2128068">
        <id>Q5XI32</id>
        <label>Capzb</label>
    </interactant>
    <organismsDiffer>false</organismsDiffer>
    <experiments>3</experiments>
</comment>
<comment type="subcellular location">
    <subcellularLocation>
        <location>Cytoplasm</location>
    </subcellularLocation>
    <subcellularLocation>
        <location>Nucleus</location>
    </subcellularLocation>
    <subcellularLocation>
        <location>Cytoplasm</location>
        <location>Perinuclear region</location>
    </subcellularLocation>
</comment>
<comment type="developmental stage">
    <text>At the completion of differentiation and migration of granular cells and at the initiation of the formation of synapses in cerebellar neurons.</text>
</comment>
<comment type="similarity">
    <text evidence="6">Belongs to the myotrophin family.</text>
</comment>
<keyword id="KW-0002">3D-structure</keyword>
<keyword id="KW-0007">Acetylation</keyword>
<keyword id="KW-0040">ANK repeat</keyword>
<keyword id="KW-0963">Cytoplasm</keyword>
<keyword id="KW-0903">Direct protein sequencing</keyword>
<keyword id="KW-0539">Nucleus</keyword>
<keyword id="KW-0597">Phosphoprotein</keyword>
<keyword id="KW-1185">Reference proteome</keyword>
<keyword id="KW-0677">Repeat</keyword>
<protein>
    <recommendedName>
        <fullName>Myotrophin</fullName>
    </recommendedName>
    <alternativeName>
        <fullName>Granule cell differentiation protein</fullName>
    </alternativeName>
    <alternativeName>
        <fullName>Protein V-1</fullName>
    </alternativeName>
</protein>
<evidence type="ECO:0000250" key="1"/>
<evidence type="ECO:0000250" key="2">
    <source>
        <dbReference type="UniProtKB" id="P58546"/>
    </source>
</evidence>
<evidence type="ECO:0000269" key="3">
    <source>
    </source>
</evidence>
<evidence type="ECO:0000269" key="4">
    <source>
    </source>
</evidence>
<evidence type="ECO:0000269" key="5">
    <source>
    </source>
</evidence>
<evidence type="ECO:0000305" key="6"/>
<evidence type="ECO:0007829" key="7">
    <source>
        <dbReference type="PDB" id="1MYO"/>
    </source>
</evidence>
<dbReference type="EMBL" id="D26179">
    <property type="protein sequence ID" value="BAA05167.1"/>
    <property type="molecule type" value="mRNA"/>
</dbReference>
<dbReference type="EMBL" id="U21661">
    <property type="protein sequence ID" value="AAC52498.1"/>
    <property type="molecule type" value="mRNA"/>
</dbReference>
<dbReference type="EMBL" id="AY951952">
    <property type="protein sequence ID" value="AAX54865.1"/>
    <property type="molecule type" value="mRNA"/>
</dbReference>
<dbReference type="EMBL" id="BC088136">
    <property type="protein sequence ID" value="AAH88136.1"/>
    <property type="molecule type" value="mRNA"/>
</dbReference>
<dbReference type="PIR" id="A54412">
    <property type="entry name" value="A54412"/>
</dbReference>
<dbReference type="RefSeq" id="NP_077350.1">
    <property type="nucleotide sequence ID" value="NM_024374.4"/>
</dbReference>
<dbReference type="PDB" id="1MYO">
    <property type="method" value="NMR"/>
    <property type="chains" value="A=1-118"/>
</dbReference>
<dbReference type="PDB" id="2MYO">
    <property type="method" value="NMR"/>
    <property type="chains" value="A=1-118"/>
</dbReference>
<dbReference type="PDBsum" id="1MYO"/>
<dbReference type="PDBsum" id="2MYO"/>
<dbReference type="BMRB" id="P62775"/>
<dbReference type="SMR" id="P62775"/>
<dbReference type="FunCoup" id="P62775">
    <property type="interactions" value="2790"/>
</dbReference>
<dbReference type="IntAct" id="P62775">
    <property type="interactions" value="1"/>
</dbReference>
<dbReference type="STRING" id="10116.ENSRNOP00000015808"/>
<dbReference type="iPTMnet" id="P62775"/>
<dbReference type="PhosphoSitePlus" id="P62775"/>
<dbReference type="jPOST" id="P62775"/>
<dbReference type="PaxDb" id="10116-ENSRNOP00000015808"/>
<dbReference type="Ensembl" id="ENSRNOT00000103488.1">
    <property type="protein sequence ID" value="ENSRNOP00000082083.1"/>
    <property type="gene ID" value="ENSRNOG00000011857.8"/>
</dbReference>
<dbReference type="GeneID" id="79215"/>
<dbReference type="KEGG" id="rno:79215"/>
<dbReference type="UCSC" id="RGD:619806">
    <property type="organism name" value="rat"/>
</dbReference>
<dbReference type="AGR" id="RGD:619806"/>
<dbReference type="CTD" id="136319"/>
<dbReference type="RGD" id="619806">
    <property type="gene designation" value="Mtpn"/>
</dbReference>
<dbReference type="eggNOG" id="KOG4214">
    <property type="taxonomic scope" value="Eukaryota"/>
</dbReference>
<dbReference type="GeneTree" id="ENSGT00430000031071"/>
<dbReference type="HOGENOM" id="CLU_000134_45_7_1"/>
<dbReference type="InParanoid" id="P62775"/>
<dbReference type="OMA" id="TALIDCT"/>
<dbReference type="OrthoDB" id="194358at2759"/>
<dbReference type="PhylomeDB" id="P62775"/>
<dbReference type="TreeFam" id="TF327387"/>
<dbReference type="EvolutionaryTrace" id="P62775"/>
<dbReference type="PRO" id="PR:P62775"/>
<dbReference type="Proteomes" id="UP000002494">
    <property type="component" value="Chromosome 4"/>
</dbReference>
<dbReference type="Bgee" id="ENSRNOG00000011857">
    <property type="expression patterns" value="Expressed in frontal cortex and 19 other cell types or tissues"/>
</dbReference>
<dbReference type="GO" id="GO:0030424">
    <property type="term" value="C:axon"/>
    <property type="evidence" value="ECO:0000314"/>
    <property type="project" value="RGD"/>
</dbReference>
<dbReference type="GO" id="GO:0005737">
    <property type="term" value="C:cytoplasm"/>
    <property type="evidence" value="ECO:0000266"/>
    <property type="project" value="RGD"/>
</dbReference>
<dbReference type="GO" id="GO:0005829">
    <property type="term" value="C:cytosol"/>
    <property type="evidence" value="ECO:0000314"/>
    <property type="project" value="UniProtKB"/>
</dbReference>
<dbReference type="GO" id="GO:0008290">
    <property type="term" value="C:F-actin capping protein complex"/>
    <property type="evidence" value="ECO:0000266"/>
    <property type="project" value="RGD"/>
</dbReference>
<dbReference type="GO" id="GO:0005634">
    <property type="term" value="C:nucleus"/>
    <property type="evidence" value="ECO:0000314"/>
    <property type="project" value="UniProtKB"/>
</dbReference>
<dbReference type="GO" id="GO:0048471">
    <property type="term" value="C:perinuclear region of cytoplasm"/>
    <property type="evidence" value="ECO:0007669"/>
    <property type="project" value="UniProtKB-SubCell"/>
</dbReference>
<dbReference type="GO" id="GO:0043565">
    <property type="term" value="F:sequence-specific DNA binding"/>
    <property type="evidence" value="ECO:0000314"/>
    <property type="project" value="RGD"/>
</dbReference>
<dbReference type="GO" id="GO:0006584">
    <property type="term" value="P:catecholamine metabolic process"/>
    <property type="evidence" value="ECO:0000270"/>
    <property type="project" value="RGD"/>
</dbReference>
<dbReference type="GO" id="GO:0071260">
    <property type="term" value="P:cellular response to mechanical stimulus"/>
    <property type="evidence" value="ECO:0000270"/>
    <property type="project" value="RGD"/>
</dbReference>
<dbReference type="GO" id="GO:0021707">
    <property type="term" value="P:cerebellar granule cell differentiation"/>
    <property type="evidence" value="ECO:0000270"/>
    <property type="project" value="RGD"/>
</dbReference>
<dbReference type="GO" id="GO:0030182">
    <property type="term" value="P:neuron differentiation"/>
    <property type="evidence" value="ECO:0000303"/>
    <property type="project" value="UniProtKB"/>
</dbReference>
<dbReference type="GO" id="GO:0010613">
    <property type="term" value="P:positive regulation of cardiac muscle hypertrophy"/>
    <property type="evidence" value="ECO:0000315"/>
    <property type="project" value="UniProtKB"/>
</dbReference>
<dbReference type="GO" id="GO:0030307">
    <property type="term" value="P:positive regulation of cell growth"/>
    <property type="evidence" value="ECO:0000314"/>
    <property type="project" value="UniProtKB"/>
</dbReference>
<dbReference type="GO" id="GO:0010557">
    <property type="term" value="P:positive regulation of macromolecule biosynthetic process"/>
    <property type="evidence" value="ECO:0000314"/>
    <property type="project" value="UniProtKB"/>
</dbReference>
<dbReference type="GO" id="GO:0051092">
    <property type="term" value="P:positive regulation of NF-kappaB transcription factor activity"/>
    <property type="evidence" value="ECO:0000314"/>
    <property type="project" value="UniProtKB"/>
</dbReference>
<dbReference type="GO" id="GO:0051247">
    <property type="term" value="P:positive regulation of protein metabolic process"/>
    <property type="evidence" value="ECO:0000314"/>
    <property type="project" value="UniProtKB"/>
</dbReference>
<dbReference type="GO" id="GO:2000812">
    <property type="term" value="P:regulation of barbed-end actin filament capping"/>
    <property type="evidence" value="ECO:0000250"/>
    <property type="project" value="UniProtKB"/>
</dbReference>
<dbReference type="GO" id="GO:0008361">
    <property type="term" value="P:regulation of cell size"/>
    <property type="evidence" value="ECO:0000266"/>
    <property type="project" value="RGD"/>
</dbReference>
<dbReference type="GO" id="GO:0043403">
    <property type="term" value="P:skeletal muscle tissue regeneration"/>
    <property type="evidence" value="ECO:0000270"/>
    <property type="project" value="RGD"/>
</dbReference>
<dbReference type="GO" id="GO:0051146">
    <property type="term" value="P:striated muscle cell differentiation"/>
    <property type="evidence" value="ECO:0000270"/>
    <property type="project" value="RGD"/>
</dbReference>
<dbReference type="FunFam" id="1.25.40.20:FF:000118">
    <property type="entry name" value="Myotrophin"/>
    <property type="match status" value="1"/>
</dbReference>
<dbReference type="Gene3D" id="1.25.40.20">
    <property type="entry name" value="Ankyrin repeat-containing domain"/>
    <property type="match status" value="1"/>
</dbReference>
<dbReference type="InterPro" id="IPR002110">
    <property type="entry name" value="Ankyrin_rpt"/>
</dbReference>
<dbReference type="InterPro" id="IPR036770">
    <property type="entry name" value="Ankyrin_rpt-contain_sf"/>
</dbReference>
<dbReference type="PANTHER" id="PTHR24171">
    <property type="entry name" value="ANKYRIN REPEAT DOMAIN-CONTAINING PROTEIN 39-RELATED"/>
    <property type="match status" value="1"/>
</dbReference>
<dbReference type="PANTHER" id="PTHR24171:SF8">
    <property type="entry name" value="BRCA1-ASSOCIATED RING DOMAIN PROTEIN 1"/>
    <property type="match status" value="1"/>
</dbReference>
<dbReference type="Pfam" id="PF12796">
    <property type="entry name" value="Ank_2"/>
    <property type="match status" value="1"/>
</dbReference>
<dbReference type="PRINTS" id="PR01415">
    <property type="entry name" value="ANKYRIN"/>
</dbReference>
<dbReference type="SMART" id="SM00248">
    <property type="entry name" value="ANK"/>
    <property type="match status" value="2"/>
</dbReference>
<dbReference type="SUPFAM" id="SSF48403">
    <property type="entry name" value="Ankyrin repeat"/>
    <property type="match status" value="1"/>
</dbReference>
<dbReference type="PROSITE" id="PS50297">
    <property type="entry name" value="ANK_REP_REGION"/>
    <property type="match status" value="1"/>
</dbReference>
<dbReference type="PROSITE" id="PS50088">
    <property type="entry name" value="ANK_REPEAT"/>
    <property type="match status" value="2"/>
</dbReference>
<reference key="1">
    <citation type="journal article" date="1994" name="J. Biol. Chem.">
        <title>Murine cerebellar neurons express a novel gene encoding a protein related to cell cycle control and cell fate determination proteins.</title>
        <authorList>
            <person name="Taoka M."/>
            <person name="Isobe T."/>
            <person name="Okuyama T."/>
            <person name="Watanabe M."/>
            <person name="Kondo H."/>
            <person name="Yamakawa Y."/>
            <person name="Ozawa F."/>
            <person name="Hishinuma F."/>
            <person name="Kubota M."/>
            <person name="Minegishi A."/>
            <person name="Song S.-Y."/>
            <person name="Yamakuni T."/>
        </authorList>
    </citation>
    <scope>NUCLEOTIDE SEQUENCE [MRNA]</scope>
    <source>
        <strain>Wistar</strain>
        <tissue>Brain</tissue>
    </source>
</reference>
<reference key="2">
    <citation type="journal article" date="1996" name="J. Biol. Chem.">
        <title>Cardiac myotrophin exhibits rel/NF-kappa B interacting activity in vitro.</title>
        <authorList>
            <person name="Sivasubramanian N.C."/>
            <person name="Adhikary G."/>
            <person name="Sil P.C."/>
            <person name="Sen S."/>
        </authorList>
    </citation>
    <scope>NUCLEOTIDE SEQUENCE [MRNA]</scope>
    <source>
        <tissue>Heart</tissue>
    </source>
</reference>
<reference key="3">
    <citation type="journal article" date="2005" name="Gene">
        <title>Characterization and functional significance of myotrophin: a gene with multiple transcripts.</title>
        <authorList>
            <person name="Adhikary G."/>
            <person name="Gupta S."/>
            <person name="Sil P."/>
            <person name="Saad Y."/>
            <person name="Sen S."/>
        </authorList>
    </citation>
    <scope>NUCLEOTIDE SEQUENCE [MRNA]</scope>
    <source>
        <strain>Sprague-Dawley</strain>
        <tissue>Heart</tissue>
    </source>
</reference>
<reference key="4">
    <citation type="journal article" date="2004" name="Genome Res.">
        <title>The status, quality, and expansion of the NIH full-length cDNA project: the Mammalian Gene Collection (MGC).</title>
        <authorList>
            <consortium name="The MGC Project Team"/>
        </authorList>
    </citation>
    <scope>NUCLEOTIDE SEQUENCE [LARGE SCALE MRNA]</scope>
    <source>
        <tissue>Spleen</tissue>
    </source>
</reference>
<reference key="5">
    <citation type="journal article" date="1992" name="Eur. J. Biochem.">
        <title>A rat cerebellar protein containing the cdc10/SW16 motif.</title>
        <authorList>
            <person name="Taoka M."/>
            <person name="Yamakuni T."/>
            <person name="Song S.-Y."/>
            <person name="Yamakawa Y."/>
            <person name="Seta K."/>
            <person name="Okuyama T."/>
            <person name="Isobe T."/>
        </authorList>
    </citation>
    <scope>PROTEIN SEQUENCE OF 2-118</scope>
    <scope>CLEAVAGE OF INITIATOR METHIONINE</scope>
    <scope>ACETYLATION AT CYS-2</scope>
    <source>
        <strain>Wistar</strain>
        <tissue>Brain</tissue>
    </source>
</reference>
<reference key="6">
    <citation type="submission" date="2007-04" db="UniProtKB">
        <authorList>
            <person name="Lubec G."/>
            <person name="Chen W.-Q."/>
        </authorList>
    </citation>
    <scope>PROTEIN SEQUENCE OF 37-57 AND 67-85</scope>
    <scope>IDENTIFICATION BY MASS SPECTROMETRY</scope>
    <source>
        <strain>Sprague-Dawley</strain>
        <tissue>Hippocampus</tissue>
    </source>
</reference>
<reference key="7">
    <citation type="journal article" date="2006" name="Tex. Heart Inst. J.">
        <title>Myotrophin/V-1 does not act as an extracellular signal to induce myocyte hypertrophy.</title>
        <authorList>
            <person name="Knuefermann P."/>
            <person name="Shi S.P."/>
            <person name="Chen P."/>
            <person name="Sakata Y."/>
            <person name="Baumgarten G."/>
            <person name="Sivasubramanian N."/>
        </authorList>
    </citation>
    <scope>SUBCELLULAR LOCATION</scope>
    <scope>FUNCTION</scope>
</reference>
<reference key="8">
    <citation type="journal article" date="2008" name="J. Biol. Chem.">
        <title>Nuclear co-translocation of myotrophin and p65 stimulates myocyte growth. Regulation by myotrophin hairpin loops.</title>
        <authorList>
            <person name="Das B."/>
            <person name="Gupta S."/>
            <person name="Vasanji A."/>
            <person name="Xu Z."/>
            <person name="Misra S."/>
            <person name="Sen S."/>
        </authorList>
    </citation>
    <scope>SUBCELLULAR LOCATION</scope>
    <scope>INTERACTION WITH RELA</scope>
    <scope>MUTAGENESIS OF GLU-33</scope>
    <scope>FUNCTION</scope>
</reference>
<reference key="9">
    <citation type="journal article" date="1997" name="Protein Sci.">
        <title>Nuclear magnetic resonance assignment and secondary structure of an ankyrin-like repeat-bearing protein: myotrophin.</title>
        <authorList>
            <person name="Yang Y."/>
            <person name="Rao N.S."/>
            <person name="Walker E."/>
            <person name="Sen S."/>
            <person name="Qin J."/>
        </authorList>
    </citation>
    <scope>STRUCTURE BY NMR</scope>
</reference>
<reference key="10">
    <citation type="journal article" date="1998" name="Structure">
        <title>The structural basis of ankyrin-like repeat function as revealed by the solution structure of myotrophin.</title>
        <authorList>
            <person name="Yang Y."/>
            <person name="Nanduri S."/>
            <person name="Sen S."/>
            <person name="Qin J."/>
        </authorList>
    </citation>
    <scope>STRUCTURE BY NMR</scope>
</reference>
<sequence>MCDKEFMWALKNGDLDEVKDYVAKGEDVNRTLEGGRKPLHYAADCGQLEILEFLLLKGADINAPDKHHITPLLSAVYEGHVSCVKLLLSKGADKTVKGPDGLTALEATDNQAIKALLQ</sequence>
<feature type="initiator methionine" description="Removed" evidence="3">
    <location>
        <position position="1"/>
    </location>
</feature>
<feature type="chain" id="PRO_0000067033" description="Myotrophin">
    <location>
        <begin position="2"/>
        <end position="118"/>
    </location>
</feature>
<feature type="repeat" description="ANK 1">
    <location>
        <begin position="2"/>
        <end position="30"/>
    </location>
</feature>
<feature type="repeat" description="ANK 2">
    <location>
        <begin position="34"/>
        <end position="66"/>
    </location>
</feature>
<feature type="repeat" description="ANK 3">
    <location>
        <begin position="67"/>
        <end position="99"/>
    </location>
</feature>
<feature type="modified residue" description="N-acetylcysteine" evidence="3">
    <location>
        <position position="2"/>
    </location>
</feature>
<feature type="modified residue" description="N6-acetyllysine" evidence="2">
    <location>
        <position position="4"/>
    </location>
</feature>
<feature type="modified residue" description="N6-acetyllysine" evidence="2">
    <location>
        <position position="11"/>
    </location>
</feature>
<feature type="modified residue" description="N6-acetyllysine" evidence="2">
    <location>
        <position position="24"/>
    </location>
</feature>
<feature type="modified residue" description="Phosphothreonine" evidence="2">
    <location>
        <position position="31"/>
    </location>
</feature>
<feature type="mutagenesis site" description="Reduced interaction with RELA. Reduced translocation to the nucleus. Reduced activation of NF-kappa-B transcription factor activity." evidence="5">
    <original>E</original>
    <variation>A</variation>
    <location>
        <position position="33"/>
    </location>
</feature>
<feature type="helix" evidence="7">
    <location>
        <begin position="3"/>
        <end position="11"/>
    </location>
</feature>
<feature type="helix" evidence="7">
    <location>
        <begin position="15"/>
        <end position="22"/>
    </location>
</feature>
<feature type="turn" evidence="7">
    <location>
        <begin position="23"/>
        <end position="25"/>
    </location>
</feature>
<feature type="strand" evidence="7">
    <location>
        <begin position="32"/>
        <end position="35"/>
    </location>
</feature>
<feature type="helix" evidence="7">
    <location>
        <begin position="40"/>
        <end position="45"/>
    </location>
</feature>
<feature type="turn" evidence="7">
    <location>
        <begin position="47"/>
        <end position="49"/>
    </location>
</feature>
<feature type="helix" evidence="7">
    <location>
        <begin position="50"/>
        <end position="56"/>
    </location>
</feature>
<feature type="turn" evidence="7">
    <location>
        <begin position="60"/>
        <end position="62"/>
    </location>
</feature>
<feature type="strand" evidence="7">
    <location>
        <begin position="65"/>
        <end position="67"/>
    </location>
</feature>
<feature type="helix" evidence="7">
    <location>
        <begin position="71"/>
        <end position="76"/>
    </location>
</feature>
<feature type="helix" evidence="7">
    <location>
        <begin position="82"/>
        <end position="88"/>
    </location>
</feature>
<feature type="strand" evidence="7">
    <location>
        <begin position="94"/>
        <end position="100"/>
    </location>
</feature>
<feature type="helix" evidence="7">
    <location>
        <begin position="102"/>
        <end position="106"/>
    </location>
</feature>
<feature type="turn" evidence="7">
    <location>
        <begin position="111"/>
        <end position="113"/>
    </location>
</feature>
<feature type="helix" evidence="7">
    <location>
        <begin position="114"/>
        <end position="117"/>
    </location>
</feature>
<organism>
    <name type="scientific">Rattus norvegicus</name>
    <name type="common">Rat</name>
    <dbReference type="NCBI Taxonomy" id="10116"/>
    <lineage>
        <taxon>Eukaryota</taxon>
        <taxon>Metazoa</taxon>
        <taxon>Chordata</taxon>
        <taxon>Craniata</taxon>
        <taxon>Vertebrata</taxon>
        <taxon>Euteleostomi</taxon>
        <taxon>Mammalia</taxon>
        <taxon>Eutheria</taxon>
        <taxon>Euarchontoglires</taxon>
        <taxon>Glires</taxon>
        <taxon>Rodentia</taxon>
        <taxon>Myomorpha</taxon>
        <taxon>Muroidea</taxon>
        <taxon>Muridae</taxon>
        <taxon>Murinae</taxon>
        <taxon>Rattus</taxon>
    </lineage>
</organism>
<accession>P62775</accession>
<accession>P80144</accession>
<accession>Q58HB3</accession>
<accession>Q9DCN8</accession>
<gene>
    <name type="primary">Mtpn</name>
    <name type="synonym">Gcdp</name>
</gene>
<name>MTPN_RAT</name>
<proteinExistence type="evidence at protein level"/>